<organism>
    <name type="scientific">Arabidopsis thaliana</name>
    <name type="common">Mouse-ear cress</name>
    <dbReference type="NCBI Taxonomy" id="3702"/>
    <lineage>
        <taxon>Eukaryota</taxon>
        <taxon>Viridiplantae</taxon>
        <taxon>Streptophyta</taxon>
        <taxon>Embryophyta</taxon>
        <taxon>Tracheophyta</taxon>
        <taxon>Spermatophyta</taxon>
        <taxon>Magnoliopsida</taxon>
        <taxon>eudicotyledons</taxon>
        <taxon>Gunneridae</taxon>
        <taxon>Pentapetalae</taxon>
        <taxon>rosids</taxon>
        <taxon>malvids</taxon>
        <taxon>Brassicales</taxon>
        <taxon>Brassicaceae</taxon>
        <taxon>Camelineae</taxon>
        <taxon>Arabidopsis</taxon>
    </lineage>
</organism>
<dbReference type="EMBL" id="AC005287">
    <property type="status" value="NOT_ANNOTATED_CDS"/>
    <property type="molecule type" value="Genomic_DNA"/>
</dbReference>
<dbReference type="EMBL" id="AC006577">
    <property type="protein sequence ID" value="AAD25792.1"/>
    <property type="molecule type" value="Genomic_DNA"/>
</dbReference>
<dbReference type="EMBL" id="CP002684">
    <property type="protein sequence ID" value="AEE33058.1"/>
    <property type="molecule type" value="Genomic_DNA"/>
</dbReference>
<dbReference type="EMBL" id="CP002684">
    <property type="protein sequence ID" value="AEE33059.1"/>
    <property type="molecule type" value="Genomic_DNA"/>
</dbReference>
<dbReference type="EMBL" id="BT020396">
    <property type="protein sequence ID" value="AAV91342.1"/>
    <property type="molecule type" value="mRNA"/>
</dbReference>
<dbReference type="EMBL" id="BT020515">
    <property type="protein sequence ID" value="AAW39016.1"/>
    <property type="molecule type" value="mRNA"/>
</dbReference>
<dbReference type="EMBL" id="AY735539">
    <property type="protein sequence ID" value="AAU44409.1"/>
    <property type="molecule type" value="mRNA"/>
</dbReference>
<dbReference type="EMBL" id="AY924710">
    <property type="protein sequence ID" value="AAX23785.1"/>
    <property type="molecule type" value="mRNA"/>
</dbReference>
<dbReference type="PIR" id="A96583">
    <property type="entry name" value="A96583"/>
</dbReference>
<dbReference type="RefSeq" id="NP_001154422.1">
    <molecule id="Q5HZ09-2"/>
    <property type="nucleotide sequence ID" value="NM_001160950.2"/>
</dbReference>
<dbReference type="RefSeq" id="NP_175820.2">
    <molecule id="Q5HZ09-1"/>
    <property type="nucleotide sequence ID" value="NM_104296.5"/>
</dbReference>
<dbReference type="SMR" id="Q5HZ09"/>
<dbReference type="FunCoup" id="Q5HZ09">
    <property type="interactions" value="546"/>
</dbReference>
<dbReference type="STRING" id="3702.Q5HZ09"/>
<dbReference type="GlyGen" id="Q5HZ09">
    <property type="glycosylation" value="1 site"/>
</dbReference>
<dbReference type="PaxDb" id="3702-AT1G54180.1"/>
<dbReference type="EnsemblPlants" id="AT1G54180.1">
    <molecule id="Q5HZ09-1"/>
    <property type="protein sequence ID" value="AT1G54180.1"/>
    <property type="gene ID" value="AT1G54180"/>
</dbReference>
<dbReference type="EnsemblPlants" id="AT1G54180.2">
    <molecule id="Q5HZ09-2"/>
    <property type="protein sequence ID" value="AT1G54180.2"/>
    <property type="gene ID" value="AT1G54180"/>
</dbReference>
<dbReference type="GeneID" id="841858"/>
<dbReference type="Gramene" id="AT1G54180.1">
    <molecule id="Q5HZ09-1"/>
    <property type="protein sequence ID" value="AT1G54180.1"/>
    <property type="gene ID" value="AT1G54180"/>
</dbReference>
<dbReference type="Gramene" id="AT1G54180.2">
    <molecule id="Q5HZ09-2"/>
    <property type="protein sequence ID" value="AT1G54180.2"/>
    <property type="gene ID" value="AT1G54180"/>
</dbReference>
<dbReference type="KEGG" id="ath:AT1G54180"/>
<dbReference type="Araport" id="AT1G54180"/>
<dbReference type="TAIR" id="AT1G54180">
    <property type="gene designation" value="BRX-LIKE3"/>
</dbReference>
<dbReference type="eggNOG" id="ENOG502QTYG">
    <property type="taxonomic scope" value="Eukaryota"/>
</dbReference>
<dbReference type="InParanoid" id="Q5HZ09"/>
<dbReference type="OMA" id="PYHAYAD"/>
<dbReference type="PRO" id="PR:Q5HZ09"/>
<dbReference type="Proteomes" id="UP000006548">
    <property type="component" value="Chromosome 1"/>
</dbReference>
<dbReference type="ExpressionAtlas" id="Q5HZ09">
    <property type="expression patterns" value="baseline and differential"/>
</dbReference>
<dbReference type="GO" id="GO:0005634">
    <property type="term" value="C:nucleus"/>
    <property type="evidence" value="ECO:0007669"/>
    <property type="project" value="UniProtKB-SubCell"/>
</dbReference>
<dbReference type="InterPro" id="IPR013591">
    <property type="entry name" value="Brevis_radix_dom"/>
</dbReference>
<dbReference type="InterPro" id="IPR044532">
    <property type="entry name" value="BRX-like"/>
</dbReference>
<dbReference type="InterPro" id="IPR027988">
    <property type="entry name" value="BRX_N"/>
</dbReference>
<dbReference type="PANTHER" id="PTHR46058">
    <property type="entry name" value="PROTEIN BREVIS RADIX-LIKE 1"/>
    <property type="match status" value="1"/>
</dbReference>
<dbReference type="PANTHER" id="PTHR46058:SF2">
    <property type="entry name" value="PROTEIN BREVIS RADIX-LIKE 3"/>
    <property type="match status" value="1"/>
</dbReference>
<dbReference type="Pfam" id="PF08381">
    <property type="entry name" value="BRX"/>
    <property type="match status" value="2"/>
</dbReference>
<dbReference type="Pfam" id="PF13713">
    <property type="entry name" value="BRX_N"/>
    <property type="match status" value="1"/>
</dbReference>
<dbReference type="PROSITE" id="PS51514">
    <property type="entry name" value="BRX"/>
    <property type="match status" value="2"/>
</dbReference>
<comment type="subcellular location">
    <subcellularLocation>
        <location evidence="1">Nucleus</location>
    </subcellularLocation>
</comment>
<comment type="alternative products">
    <event type="alternative splicing"/>
    <isoform>
        <id>Q5HZ09-1</id>
        <name>1</name>
        <sequence type="displayed"/>
    </isoform>
    <isoform>
        <id>Q5HZ09-2</id>
        <name>2</name>
        <sequence type="described" ref="VSP_037243"/>
    </isoform>
</comment>
<comment type="tissue specificity">
    <text evidence="4">Expressed in roots.</text>
</comment>
<comment type="disruption phenotype">
    <text evidence="4">No visible phenotype.</text>
</comment>
<comment type="similarity">
    <text evidence="6">Belongs to the BRX family.</text>
</comment>
<accession>Q5HZ09</accession>
<accession>Q5M752</accession>
<accession>Q5XVI3</accession>
<accession>Q9SYH6</accession>
<name>BRXL3_ARATH</name>
<evidence type="ECO:0000250" key="1"/>
<evidence type="ECO:0000255" key="2">
    <source>
        <dbReference type="PROSITE-ProRule" id="PRU00847"/>
    </source>
</evidence>
<evidence type="ECO:0000256" key="3">
    <source>
        <dbReference type="SAM" id="MobiDB-lite"/>
    </source>
</evidence>
<evidence type="ECO:0000269" key="4">
    <source>
    </source>
</evidence>
<evidence type="ECO:0000303" key="5">
    <source ref="3"/>
</evidence>
<evidence type="ECO:0000305" key="6"/>
<proteinExistence type="evidence at transcript level"/>
<sequence>MLTCIACTKQLNTNNGGSTREEDEEHGVIGTPRTKQAIKSLTSQLKDMAVKASGAYKNCKPCSGTTNRNQNRNYADSDAASDSGRFHYSYQRAGTATSTPKIWGNEMESRLKGISSEEGTPTSMSGRTESIVFMEDDEVKEWVAQVEPGVLITFVSLPQGGNDLKRIRFRSTRFPYYRDQLLLWCRQGWVFWPQNCREMFNKWQAQKWWVENFEKVMELYNVQFNQQSVPLQTPPVSEDGGSQIQSVKDSPVTPPLERERPHRNIPGSSGFASTPKLSSISGTKTETSSIDGSARSSSVDRSEEVSVSNASDMESEWVEQDEPGIYITIRALPDGNRELRRVRFSRDKFGETHARLWWEQNRARIQQQYL</sequence>
<protein>
    <recommendedName>
        <fullName>Protein Brevis radix-like 3</fullName>
        <shortName>AtBRXL3</shortName>
    </recommendedName>
</protein>
<feature type="chain" id="PRO_0000373824" description="Protein Brevis radix-like 3">
    <location>
        <begin position="1"/>
        <end position="370"/>
    </location>
</feature>
<feature type="domain" description="BRX 1" evidence="2">
    <location>
        <begin position="140"/>
        <end position="221"/>
    </location>
</feature>
<feature type="domain" description="BRX 2" evidence="2">
    <location>
        <begin position="315"/>
        <end position="370"/>
    </location>
</feature>
<feature type="region of interest" description="Disordered" evidence="3">
    <location>
        <begin position="231"/>
        <end position="316"/>
    </location>
</feature>
<feature type="compositionally biased region" description="Polar residues" evidence="3">
    <location>
        <begin position="231"/>
        <end position="248"/>
    </location>
</feature>
<feature type="compositionally biased region" description="Polar residues" evidence="3">
    <location>
        <begin position="266"/>
        <end position="291"/>
    </location>
</feature>
<feature type="splice variant" id="VSP_037243" description="In isoform 2." evidence="5">
    <original>RSTRFPYYRDQLLLWCRQGWVFWPQNC</original>
    <variation>S</variation>
    <location>
        <begin position="170"/>
        <end position="196"/>
    </location>
</feature>
<feature type="sequence conflict" description="In Ref. 3; AAV91342/AAU44409." evidence="6" ref="3">
    <original>I</original>
    <variation>T</variation>
    <location>
        <position position="290"/>
    </location>
</feature>
<gene>
    <name type="primary">BRXL3</name>
    <name type="ordered locus">At1g54180</name>
    <name type="ORF">F15I1.28</name>
</gene>
<keyword id="KW-0025">Alternative splicing</keyword>
<keyword id="KW-0539">Nucleus</keyword>
<keyword id="KW-1185">Reference proteome</keyword>
<keyword id="KW-0677">Repeat</keyword>
<reference key="1">
    <citation type="journal article" date="2000" name="Nature">
        <title>Sequence and analysis of chromosome 1 of the plant Arabidopsis thaliana.</title>
        <authorList>
            <person name="Theologis A."/>
            <person name="Ecker J.R."/>
            <person name="Palm C.J."/>
            <person name="Federspiel N.A."/>
            <person name="Kaul S."/>
            <person name="White O."/>
            <person name="Alonso J."/>
            <person name="Altafi H."/>
            <person name="Araujo R."/>
            <person name="Bowman C.L."/>
            <person name="Brooks S.Y."/>
            <person name="Buehler E."/>
            <person name="Chan A."/>
            <person name="Chao Q."/>
            <person name="Chen H."/>
            <person name="Cheuk R.F."/>
            <person name="Chin C.W."/>
            <person name="Chung M.K."/>
            <person name="Conn L."/>
            <person name="Conway A.B."/>
            <person name="Conway A.R."/>
            <person name="Creasy T.H."/>
            <person name="Dewar K."/>
            <person name="Dunn P."/>
            <person name="Etgu P."/>
            <person name="Feldblyum T.V."/>
            <person name="Feng J.-D."/>
            <person name="Fong B."/>
            <person name="Fujii C.Y."/>
            <person name="Gill J.E."/>
            <person name="Goldsmith A.D."/>
            <person name="Haas B."/>
            <person name="Hansen N.F."/>
            <person name="Hughes B."/>
            <person name="Huizar L."/>
            <person name="Hunter J.L."/>
            <person name="Jenkins J."/>
            <person name="Johnson-Hopson C."/>
            <person name="Khan S."/>
            <person name="Khaykin E."/>
            <person name="Kim C.J."/>
            <person name="Koo H.L."/>
            <person name="Kremenetskaia I."/>
            <person name="Kurtz D.B."/>
            <person name="Kwan A."/>
            <person name="Lam B."/>
            <person name="Langin-Hooper S."/>
            <person name="Lee A."/>
            <person name="Lee J.M."/>
            <person name="Lenz C.A."/>
            <person name="Li J.H."/>
            <person name="Li Y.-P."/>
            <person name="Lin X."/>
            <person name="Liu S.X."/>
            <person name="Liu Z.A."/>
            <person name="Luros J.S."/>
            <person name="Maiti R."/>
            <person name="Marziali A."/>
            <person name="Militscher J."/>
            <person name="Miranda M."/>
            <person name="Nguyen M."/>
            <person name="Nierman W.C."/>
            <person name="Osborne B.I."/>
            <person name="Pai G."/>
            <person name="Peterson J."/>
            <person name="Pham P.K."/>
            <person name="Rizzo M."/>
            <person name="Rooney T."/>
            <person name="Rowley D."/>
            <person name="Sakano H."/>
            <person name="Salzberg S.L."/>
            <person name="Schwartz J.R."/>
            <person name="Shinn P."/>
            <person name="Southwick A.M."/>
            <person name="Sun H."/>
            <person name="Tallon L.J."/>
            <person name="Tambunga G."/>
            <person name="Toriumi M.J."/>
            <person name="Town C.D."/>
            <person name="Utterback T."/>
            <person name="Van Aken S."/>
            <person name="Vaysberg M."/>
            <person name="Vysotskaia V.S."/>
            <person name="Walker M."/>
            <person name="Wu D."/>
            <person name="Yu G."/>
            <person name="Fraser C.M."/>
            <person name="Venter J.C."/>
            <person name="Davis R.W."/>
        </authorList>
    </citation>
    <scope>NUCLEOTIDE SEQUENCE [LARGE SCALE GENOMIC DNA]</scope>
    <source>
        <strain>cv. Columbia</strain>
    </source>
</reference>
<reference key="2">
    <citation type="journal article" date="2017" name="Plant J.">
        <title>Araport11: a complete reannotation of the Arabidopsis thaliana reference genome.</title>
        <authorList>
            <person name="Cheng C.Y."/>
            <person name="Krishnakumar V."/>
            <person name="Chan A.P."/>
            <person name="Thibaud-Nissen F."/>
            <person name="Schobel S."/>
            <person name="Town C.D."/>
        </authorList>
    </citation>
    <scope>GENOME REANNOTATION</scope>
    <source>
        <strain>cv. Columbia</strain>
    </source>
</reference>
<reference key="3">
    <citation type="submission" date="2005-01" db="EMBL/GenBank/DDBJ databases">
        <title>Arabidopsis ORF clones.</title>
        <authorList>
            <person name="Kim C.J."/>
            <person name="Chen H."/>
            <person name="Cheuk R.F."/>
            <person name="Shinn P."/>
            <person name="Ecker J.R."/>
        </authorList>
    </citation>
    <scope>NUCLEOTIDE SEQUENCE [LARGE SCALE MRNA] (ISOFORMS 1 AND 2)</scope>
    <source>
        <strain>cv. Columbia</strain>
    </source>
</reference>
<reference key="4">
    <citation type="submission" date="2005-02" db="EMBL/GenBank/DDBJ databases">
        <authorList>
            <person name="Underwood B.A."/>
            <person name="Xiao Y.-L."/>
            <person name="Moskal W.A. Jr."/>
            <person name="Monaghan E.L."/>
            <person name="Wang W."/>
            <person name="Redman J.C."/>
            <person name="Wu H.C."/>
            <person name="Utterback T."/>
            <person name="Town C.D."/>
        </authorList>
    </citation>
    <scope>NUCLEOTIDE SEQUENCE [LARGE SCALE MRNA] OF 199-370</scope>
    <source>
        <strain>cv. Columbia</strain>
    </source>
</reference>
<reference key="5">
    <citation type="journal article" date="2004" name="Genes Dev.">
        <title>Natural genetic variation in Arabidopsis identifies BREVIS RADIX, a novel regulator of cell proliferation and elongation in the root.</title>
        <authorList>
            <person name="Mouchel C.F."/>
            <person name="Briggs G.C."/>
            <person name="Hardtke C.S."/>
        </authorList>
    </citation>
    <scope>IDENTIFICATION</scope>
</reference>
<reference key="6">
    <citation type="journal article" date="2006" name="Plant Physiol.">
        <title>Characterization of the plant-specific BREVIS RADIX gene family reveals limited genetic redundancy despite high sequence conservation.</title>
        <authorList>
            <person name="Briggs G.C."/>
            <person name="Mouchel C.F."/>
            <person name="Hardtke C.S."/>
        </authorList>
    </citation>
    <scope>GENE FAMILY</scope>
    <scope>DISRUPTION PHENOTYPE</scope>
    <scope>TISSUE SPECIFICITY</scope>
</reference>